<reference key="1">
    <citation type="journal article" date="2009" name="Genome Res.">
        <title>Comparative genomic analyses of the human fungal pathogens Coccidioides and their relatives.</title>
        <authorList>
            <person name="Sharpton T.J."/>
            <person name="Stajich J.E."/>
            <person name="Rounsley S.D."/>
            <person name="Gardner M.J."/>
            <person name="Wortman J.R."/>
            <person name="Jordar V.S."/>
            <person name="Maiti R."/>
            <person name="Kodira C.D."/>
            <person name="Neafsey D.E."/>
            <person name="Zeng Q."/>
            <person name="Hung C.-Y."/>
            <person name="McMahan C."/>
            <person name="Muszewska A."/>
            <person name="Grynberg M."/>
            <person name="Mandel M.A."/>
            <person name="Kellner E.M."/>
            <person name="Barker B.M."/>
            <person name="Galgiani J.N."/>
            <person name="Orbach M.J."/>
            <person name="Kirkland T.N."/>
            <person name="Cole G.T."/>
            <person name="Henn M.R."/>
            <person name="Birren B.W."/>
            <person name="Taylor J.W."/>
        </authorList>
    </citation>
    <scope>NUCLEOTIDE SEQUENCE [LARGE SCALE GENOMIC DNA]</scope>
    <source>
        <strain>C735</strain>
    </source>
</reference>
<accession>C5PFX0</accession>
<comment type="function">
    <text evidence="1">Positively regulates the activity of the minus-end directed microtubule motor protein dynein. May enhance dynein-mediated microtubule sliding by targeting dynein to the microtubule plus end. Required for nuclear migration during vegetative growth as well as development. Required for retrograde early endosome (EE) transport from the hyphal tip. Required for localization of dynein to the mitotic spindle poles. Recruits additional proteins to the dynein complex at SPBs.</text>
</comment>
<comment type="subunit">
    <text evidence="1">Self-associates. Interacts with NDL1 and dynein.</text>
</comment>
<comment type="subcellular location">
    <subcellularLocation>
        <location evidence="1">Cytoplasm</location>
        <location evidence="1">Cytoskeleton</location>
    </subcellularLocation>
    <subcellularLocation>
        <location evidence="1">Cytoplasm</location>
        <location evidence="1">Cytoskeleton</location>
        <location evidence="1">Spindle pole</location>
    </subcellularLocation>
    <text evidence="1">Localizes to the plus ends of microtubules at the hyphal tip and the mitotic spindle poles.</text>
</comment>
<comment type="domain">
    <text evidence="1">Dimerization mediated by the LisH domain may be required to activate dynein.</text>
</comment>
<comment type="similarity">
    <text evidence="1">Belongs to the WD repeat LIS1/nudF family.</text>
</comment>
<comment type="sequence caution" evidence="3">
    <conflict type="erroneous gene model prediction">
        <sequence resource="EMBL-CDS" id="EER23423"/>
    </conflict>
</comment>
<feature type="chain" id="PRO_0000405078" description="Nuclear distribution protein PAC1">
    <location>
        <begin position="1"/>
        <end position="471"/>
    </location>
</feature>
<feature type="domain" description="LisH" evidence="1">
    <location>
        <begin position="9"/>
        <end position="41"/>
    </location>
</feature>
<feature type="repeat" description="WD 1">
    <location>
        <begin position="113"/>
        <end position="154"/>
    </location>
</feature>
<feature type="repeat" description="WD 2">
    <location>
        <begin position="156"/>
        <end position="196"/>
    </location>
</feature>
<feature type="repeat" description="WD 3">
    <location>
        <begin position="200"/>
        <end position="247"/>
    </location>
</feature>
<feature type="repeat" description="WD 4">
    <location>
        <begin position="250"/>
        <end position="289"/>
    </location>
</feature>
<feature type="repeat" description="WD 5">
    <location>
        <begin position="292"/>
        <end position="352"/>
    </location>
</feature>
<feature type="repeat" description="WD 6">
    <location>
        <begin position="354"/>
        <end position="393"/>
    </location>
</feature>
<feature type="repeat" description="WD 7">
    <location>
        <begin position="398"/>
        <end position="428"/>
    </location>
</feature>
<feature type="repeat" description="WD 8">
    <location>
        <begin position="429"/>
        <end position="467"/>
    </location>
</feature>
<feature type="region of interest" description="Disordered" evidence="2">
    <location>
        <begin position="83"/>
        <end position="108"/>
    </location>
</feature>
<feature type="region of interest" description="Disordered" evidence="2">
    <location>
        <begin position="424"/>
        <end position="449"/>
    </location>
</feature>
<feature type="coiled-coil region" evidence="1">
    <location>
        <begin position="60"/>
        <end position="87"/>
    </location>
</feature>
<feature type="compositionally biased region" description="Polar residues" evidence="2">
    <location>
        <begin position="83"/>
        <end position="93"/>
    </location>
</feature>
<feature type="compositionally biased region" description="Polar residues" evidence="2">
    <location>
        <begin position="428"/>
        <end position="441"/>
    </location>
</feature>
<organism>
    <name type="scientific">Coccidioides posadasii (strain C735)</name>
    <name type="common">Valley fever fungus</name>
    <dbReference type="NCBI Taxonomy" id="222929"/>
    <lineage>
        <taxon>Eukaryota</taxon>
        <taxon>Fungi</taxon>
        <taxon>Dikarya</taxon>
        <taxon>Ascomycota</taxon>
        <taxon>Pezizomycotina</taxon>
        <taxon>Eurotiomycetes</taxon>
        <taxon>Eurotiomycetidae</taxon>
        <taxon>Onygenales</taxon>
        <taxon>Onygenaceae</taxon>
        <taxon>Coccidioides</taxon>
    </lineage>
</organism>
<sequence>MSQLLTARQAEELHKSMIAYLLSVNLSKSAAALREELADSVHLDDATAKKYEGLLEKKWTSVVRLQKKIMDLESRNAALQQELDSATPTSLSRRNQDPASWLPRAPARHSLQSHRGPVTCVAFHPIFSSLASGSEDTTIKIWDWELGELERTIKGHTRAVLDVDYGGPRGGTLLASCSSDLTIKLWDPSDEYKNIRTLPGHDHSVSAVRFIPSGAAGSPMSGNLLASASRDKTIRIWDVTTGYCVKTIQGHLDWVRDVFPSPDGRFLMSGGDDRVPRLLDASSGETKSTFIGHEHVVECVTIAPAASYPHLAALAGLKKPPPASSSAEFVATGSRDKTIKIWDSRGTLIKTLVGHDNWIRALVFHPGGKYLLSVSDDKTLRCWDLSQECKCVRTVSDAHGHFVSCIRWAPNIINESGLVSGEGGINGQGTPSMNGVSISTTSKKEDTGGGGKIRCVIATGSVDMNVRVFAS</sequence>
<protein>
    <recommendedName>
        <fullName evidence="1">Nuclear distribution protein PAC1</fullName>
    </recommendedName>
    <alternativeName>
        <fullName evidence="1">Lissencephaly-1 homolog</fullName>
        <shortName evidence="1">LIS-1</shortName>
    </alternativeName>
    <alternativeName>
        <fullName evidence="1">nudF homolog</fullName>
    </alternativeName>
</protein>
<keyword id="KW-0131">Cell cycle</keyword>
<keyword id="KW-0132">Cell division</keyword>
<keyword id="KW-0175">Coiled coil</keyword>
<keyword id="KW-0963">Cytoplasm</keyword>
<keyword id="KW-0206">Cytoskeleton</keyword>
<keyword id="KW-0493">Microtubule</keyword>
<keyword id="KW-0498">Mitosis</keyword>
<keyword id="KW-0677">Repeat</keyword>
<keyword id="KW-0813">Transport</keyword>
<keyword id="KW-0853">WD repeat</keyword>
<evidence type="ECO:0000255" key="1">
    <source>
        <dbReference type="HAMAP-Rule" id="MF_03141"/>
    </source>
</evidence>
<evidence type="ECO:0000256" key="2">
    <source>
        <dbReference type="SAM" id="MobiDB-lite"/>
    </source>
</evidence>
<evidence type="ECO:0000305" key="3"/>
<proteinExistence type="inferred from homology"/>
<dbReference type="EMBL" id="ACFW01000049">
    <property type="protein sequence ID" value="EER23423.1"/>
    <property type="status" value="ALT_SEQ"/>
    <property type="molecule type" value="Genomic_DNA"/>
</dbReference>
<dbReference type="RefSeq" id="XP_003065568.1">
    <property type="nucleotide sequence ID" value="XM_003065522.1"/>
</dbReference>
<dbReference type="SMR" id="C5PFX0"/>
<dbReference type="GeneID" id="9691038"/>
<dbReference type="KEGG" id="cpw:9691038"/>
<dbReference type="HOGENOM" id="CLU_000288_57_15_1"/>
<dbReference type="OrthoDB" id="10264588at2759"/>
<dbReference type="Proteomes" id="UP000009084">
    <property type="component" value="Unassembled WGS sequence"/>
</dbReference>
<dbReference type="GO" id="GO:0005737">
    <property type="term" value="C:cytoplasm"/>
    <property type="evidence" value="ECO:0007669"/>
    <property type="project" value="UniProtKB-UniRule"/>
</dbReference>
<dbReference type="GO" id="GO:0005874">
    <property type="term" value="C:microtubule"/>
    <property type="evidence" value="ECO:0007669"/>
    <property type="project" value="UniProtKB-KW"/>
</dbReference>
<dbReference type="GO" id="GO:0005875">
    <property type="term" value="C:microtubule associated complex"/>
    <property type="evidence" value="ECO:0007669"/>
    <property type="project" value="UniProtKB-UniRule"/>
</dbReference>
<dbReference type="GO" id="GO:0000922">
    <property type="term" value="C:spindle pole"/>
    <property type="evidence" value="ECO:0007669"/>
    <property type="project" value="UniProtKB-SubCell"/>
</dbReference>
<dbReference type="GO" id="GO:0070840">
    <property type="term" value="F:dynein complex binding"/>
    <property type="evidence" value="ECO:0007669"/>
    <property type="project" value="UniProtKB-UniRule"/>
</dbReference>
<dbReference type="GO" id="GO:0051301">
    <property type="term" value="P:cell division"/>
    <property type="evidence" value="ECO:0007669"/>
    <property type="project" value="UniProtKB-KW"/>
</dbReference>
<dbReference type="GO" id="GO:0000132">
    <property type="term" value="P:establishment of mitotic spindle orientation"/>
    <property type="evidence" value="ECO:0007669"/>
    <property type="project" value="UniProtKB-UniRule"/>
</dbReference>
<dbReference type="GO" id="GO:0051012">
    <property type="term" value="P:microtubule sliding"/>
    <property type="evidence" value="ECO:0007669"/>
    <property type="project" value="UniProtKB-UniRule"/>
</dbReference>
<dbReference type="CDD" id="cd00200">
    <property type="entry name" value="WD40"/>
    <property type="match status" value="1"/>
</dbReference>
<dbReference type="FunFam" id="1.20.960.30:FF:000002">
    <property type="entry name" value="Platelet-activating factor acetylhydrolase ib"/>
    <property type="match status" value="1"/>
</dbReference>
<dbReference type="Gene3D" id="1.20.960.30">
    <property type="match status" value="1"/>
</dbReference>
<dbReference type="Gene3D" id="2.130.10.10">
    <property type="entry name" value="YVTN repeat-like/Quinoprotein amine dehydrogenase"/>
    <property type="match status" value="1"/>
</dbReference>
<dbReference type="HAMAP" id="MF_03141">
    <property type="entry name" value="lis1"/>
    <property type="match status" value="1"/>
</dbReference>
<dbReference type="InterPro" id="IPR017252">
    <property type="entry name" value="Dynein_regulator_LIS1"/>
</dbReference>
<dbReference type="InterPro" id="IPR020472">
    <property type="entry name" value="G-protein_beta_WD-40_rep"/>
</dbReference>
<dbReference type="InterPro" id="IPR037190">
    <property type="entry name" value="LIS1_N"/>
</dbReference>
<dbReference type="InterPro" id="IPR006594">
    <property type="entry name" value="LisH"/>
</dbReference>
<dbReference type="InterPro" id="IPR056795">
    <property type="entry name" value="PAC1-like_LisH-like_dom"/>
</dbReference>
<dbReference type="InterPro" id="IPR015943">
    <property type="entry name" value="WD40/YVTN_repeat-like_dom_sf"/>
</dbReference>
<dbReference type="InterPro" id="IPR019775">
    <property type="entry name" value="WD40_repeat_CS"/>
</dbReference>
<dbReference type="InterPro" id="IPR036322">
    <property type="entry name" value="WD40_repeat_dom_sf"/>
</dbReference>
<dbReference type="InterPro" id="IPR001680">
    <property type="entry name" value="WD40_rpt"/>
</dbReference>
<dbReference type="InterPro" id="IPR050349">
    <property type="entry name" value="WD_LIS1/nudF_dynein_reg"/>
</dbReference>
<dbReference type="PANTHER" id="PTHR44129">
    <property type="entry name" value="WD REPEAT-CONTAINING PROTEIN POP1"/>
    <property type="match status" value="1"/>
</dbReference>
<dbReference type="Pfam" id="PF24951">
    <property type="entry name" value="LisH_PAC1"/>
    <property type="match status" value="1"/>
</dbReference>
<dbReference type="Pfam" id="PF00400">
    <property type="entry name" value="WD40"/>
    <property type="match status" value="6"/>
</dbReference>
<dbReference type="PIRSF" id="PIRSF037647">
    <property type="entry name" value="Dynein_regulator_Lis1"/>
    <property type="match status" value="1"/>
</dbReference>
<dbReference type="PRINTS" id="PR00320">
    <property type="entry name" value="GPROTEINBRPT"/>
</dbReference>
<dbReference type="SMART" id="SM00320">
    <property type="entry name" value="WD40"/>
    <property type="match status" value="7"/>
</dbReference>
<dbReference type="SUPFAM" id="SSF109925">
    <property type="entry name" value="Lissencephaly-1 protein (Lis-1, PAF-AH alpha) N-terminal domain"/>
    <property type="match status" value="1"/>
</dbReference>
<dbReference type="SUPFAM" id="SSF50978">
    <property type="entry name" value="WD40 repeat-like"/>
    <property type="match status" value="1"/>
</dbReference>
<dbReference type="PROSITE" id="PS50896">
    <property type="entry name" value="LISH"/>
    <property type="match status" value="1"/>
</dbReference>
<dbReference type="PROSITE" id="PS00678">
    <property type="entry name" value="WD_REPEATS_1"/>
    <property type="match status" value="2"/>
</dbReference>
<dbReference type="PROSITE" id="PS50082">
    <property type="entry name" value="WD_REPEATS_2"/>
    <property type="match status" value="6"/>
</dbReference>
<dbReference type="PROSITE" id="PS50294">
    <property type="entry name" value="WD_REPEATS_REGION"/>
    <property type="match status" value="1"/>
</dbReference>
<name>LIS1_COCP7</name>
<gene>
    <name evidence="1" type="primary">PAC1</name>
    <name evidence="1" type="synonym">LIS1</name>
    <name type="ORF">CPC735_047930</name>
</gene>